<feature type="chain" id="PRO_0000227362" description="UvrABC system protein B">
    <location>
        <begin position="1"/>
        <end position="673"/>
    </location>
</feature>
<feature type="domain" description="Helicase ATP-binding" evidence="1">
    <location>
        <begin position="26"/>
        <end position="414"/>
    </location>
</feature>
<feature type="domain" description="Helicase C-terminal" evidence="1">
    <location>
        <begin position="431"/>
        <end position="597"/>
    </location>
</feature>
<feature type="domain" description="UVR" evidence="1">
    <location>
        <begin position="633"/>
        <end position="668"/>
    </location>
</feature>
<feature type="region of interest" description="Disordered" evidence="2">
    <location>
        <begin position="608"/>
        <end position="627"/>
    </location>
</feature>
<feature type="short sequence motif" description="Beta-hairpin">
    <location>
        <begin position="92"/>
        <end position="115"/>
    </location>
</feature>
<feature type="binding site" evidence="1">
    <location>
        <begin position="39"/>
        <end position="46"/>
    </location>
    <ligand>
        <name>ATP</name>
        <dbReference type="ChEBI" id="CHEBI:30616"/>
    </ligand>
</feature>
<dbReference type="EMBL" id="CP000038">
    <property type="protein sequence ID" value="AAZ87507.1"/>
    <property type="molecule type" value="Genomic_DNA"/>
</dbReference>
<dbReference type="RefSeq" id="WP_000042533.1">
    <property type="nucleotide sequence ID" value="NC_007384.1"/>
</dbReference>
<dbReference type="SMR" id="Q3Z405"/>
<dbReference type="GeneID" id="93776651"/>
<dbReference type="KEGG" id="ssn:SSON_0758"/>
<dbReference type="HOGENOM" id="CLU_009621_2_1_6"/>
<dbReference type="Proteomes" id="UP000002529">
    <property type="component" value="Chromosome"/>
</dbReference>
<dbReference type="GO" id="GO:0005737">
    <property type="term" value="C:cytoplasm"/>
    <property type="evidence" value="ECO:0007669"/>
    <property type="project" value="UniProtKB-SubCell"/>
</dbReference>
<dbReference type="GO" id="GO:0009380">
    <property type="term" value="C:excinuclease repair complex"/>
    <property type="evidence" value="ECO:0007669"/>
    <property type="project" value="InterPro"/>
</dbReference>
<dbReference type="GO" id="GO:0005524">
    <property type="term" value="F:ATP binding"/>
    <property type="evidence" value="ECO:0007669"/>
    <property type="project" value="UniProtKB-UniRule"/>
</dbReference>
<dbReference type="GO" id="GO:0016887">
    <property type="term" value="F:ATP hydrolysis activity"/>
    <property type="evidence" value="ECO:0007669"/>
    <property type="project" value="InterPro"/>
</dbReference>
<dbReference type="GO" id="GO:0003677">
    <property type="term" value="F:DNA binding"/>
    <property type="evidence" value="ECO:0007669"/>
    <property type="project" value="UniProtKB-UniRule"/>
</dbReference>
<dbReference type="GO" id="GO:0009381">
    <property type="term" value="F:excinuclease ABC activity"/>
    <property type="evidence" value="ECO:0007669"/>
    <property type="project" value="UniProtKB-UniRule"/>
</dbReference>
<dbReference type="GO" id="GO:0006289">
    <property type="term" value="P:nucleotide-excision repair"/>
    <property type="evidence" value="ECO:0007669"/>
    <property type="project" value="UniProtKB-UniRule"/>
</dbReference>
<dbReference type="GO" id="GO:0009432">
    <property type="term" value="P:SOS response"/>
    <property type="evidence" value="ECO:0007669"/>
    <property type="project" value="UniProtKB-UniRule"/>
</dbReference>
<dbReference type="CDD" id="cd17916">
    <property type="entry name" value="DEXHc_UvrB"/>
    <property type="match status" value="1"/>
</dbReference>
<dbReference type="CDD" id="cd18790">
    <property type="entry name" value="SF2_C_UvrB"/>
    <property type="match status" value="1"/>
</dbReference>
<dbReference type="FunFam" id="3.40.50.300:FF:000257">
    <property type="entry name" value="UvrABC system protein B"/>
    <property type="match status" value="1"/>
</dbReference>
<dbReference type="FunFam" id="3.40.50.300:FF:000401">
    <property type="entry name" value="UvrABC system protein B"/>
    <property type="match status" value="1"/>
</dbReference>
<dbReference type="FunFam" id="3.40.50.300:FF:000477">
    <property type="entry name" value="UvrABC system protein B"/>
    <property type="match status" value="1"/>
</dbReference>
<dbReference type="Gene3D" id="3.40.50.300">
    <property type="entry name" value="P-loop containing nucleotide triphosphate hydrolases"/>
    <property type="match status" value="3"/>
</dbReference>
<dbReference type="Gene3D" id="4.10.860.10">
    <property type="entry name" value="UVR domain"/>
    <property type="match status" value="1"/>
</dbReference>
<dbReference type="HAMAP" id="MF_00204">
    <property type="entry name" value="UvrB"/>
    <property type="match status" value="1"/>
</dbReference>
<dbReference type="InterPro" id="IPR006935">
    <property type="entry name" value="Helicase/UvrB_N"/>
</dbReference>
<dbReference type="InterPro" id="IPR014001">
    <property type="entry name" value="Helicase_ATP-bd"/>
</dbReference>
<dbReference type="InterPro" id="IPR001650">
    <property type="entry name" value="Helicase_C-like"/>
</dbReference>
<dbReference type="InterPro" id="IPR027417">
    <property type="entry name" value="P-loop_NTPase"/>
</dbReference>
<dbReference type="InterPro" id="IPR001943">
    <property type="entry name" value="UVR_dom"/>
</dbReference>
<dbReference type="InterPro" id="IPR036876">
    <property type="entry name" value="UVR_dom_sf"/>
</dbReference>
<dbReference type="InterPro" id="IPR004807">
    <property type="entry name" value="UvrB"/>
</dbReference>
<dbReference type="InterPro" id="IPR041471">
    <property type="entry name" value="UvrB_inter"/>
</dbReference>
<dbReference type="InterPro" id="IPR024759">
    <property type="entry name" value="UvrB_YAD/RRR_dom"/>
</dbReference>
<dbReference type="NCBIfam" id="NF003673">
    <property type="entry name" value="PRK05298.1"/>
    <property type="match status" value="1"/>
</dbReference>
<dbReference type="NCBIfam" id="TIGR00631">
    <property type="entry name" value="uvrb"/>
    <property type="match status" value="1"/>
</dbReference>
<dbReference type="PANTHER" id="PTHR24029">
    <property type="entry name" value="UVRABC SYSTEM PROTEIN B"/>
    <property type="match status" value="1"/>
</dbReference>
<dbReference type="PANTHER" id="PTHR24029:SF0">
    <property type="entry name" value="UVRABC SYSTEM PROTEIN B"/>
    <property type="match status" value="1"/>
</dbReference>
<dbReference type="Pfam" id="PF00271">
    <property type="entry name" value="Helicase_C"/>
    <property type="match status" value="1"/>
</dbReference>
<dbReference type="Pfam" id="PF04851">
    <property type="entry name" value="ResIII"/>
    <property type="match status" value="1"/>
</dbReference>
<dbReference type="Pfam" id="PF02151">
    <property type="entry name" value="UVR"/>
    <property type="match status" value="1"/>
</dbReference>
<dbReference type="Pfam" id="PF12344">
    <property type="entry name" value="UvrB"/>
    <property type="match status" value="1"/>
</dbReference>
<dbReference type="Pfam" id="PF17757">
    <property type="entry name" value="UvrB_inter"/>
    <property type="match status" value="1"/>
</dbReference>
<dbReference type="SMART" id="SM00487">
    <property type="entry name" value="DEXDc"/>
    <property type="match status" value="1"/>
</dbReference>
<dbReference type="SMART" id="SM00490">
    <property type="entry name" value="HELICc"/>
    <property type="match status" value="1"/>
</dbReference>
<dbReference type="SUPFAM" id="SSF46600">
    <property type="entry name" value="C-terminal UvrC-binding domain of UvrB"/>
    <property type="match status" value="1"/>
</dbReference>
<dbReference type="SUPFAM" id="SSF52540">
    <property type="entry name" value="P-loop containing nucleoside triphosphate hydrolases"/>
    <property type="match status" value="2"/>
</dbReference>
<dbReference type="PROSITE" id="PS51192">
    <property type="entry name" value="HELICASE_ATP_BIND_1"/>
    <property type="match status" value="1"/>
</dbReference>
<dbReference type="PROSITE" id="PS51194">
    <property type="entry name" value="HELICASE_CTER"/>
    <property type="match status" value="1"/>
</dbReference>
<dbReference type="PROSITE" id="PS50151">
    <property type="entry name" value="UVR"/>
    <property type="match status" value="1"/>
</dbReference>
<gene>
    <name evidence="1" type="primary">uvrB</name>
    <name type="ordered locus">SSON_0758</name>
</gene>
<organism>
    <name type="scientific">Shigella sonnei (strain Ss046)</name>
    <dbReference type="NCBI Taxonomy" id="300269"/>
    <lineage>
        <taxon>Bacteria</taxon>
        <taxon>Pseudomonadati</taxon>
        <taxon>Pseudomonadota</taxon>
        <taxon>Gammaproteobacteria</taxon>
        <taxon>Enterobacterales</taxon>
        <taxon>Enterobacteriaceae</taxon>
        <taxon>Shigella</taxon>
    </lineage>
</organism>
<protein>
    <recommendedName>
        <fullName evidence="1">UvrABC system protein B</fullName>
        <shortName evidence="1">Protein UvrB</shortName>
    </recommendedName>
    <alternativeName>
        <fullName evidence="1">Excinuclease ABC subunit B</fullName>
    </alternativeName>
</protein>
<name>UVRB_SHISS</name>
<sequence length="673" mass="76226">MSKPFKLNSAFKPSGDQPEAIRRLEEGLEDGLAHQTLLGVTGSGKTFTIANVIADLQRPTMVLAPNKTLAAQLYGEMKEFFPENAVEYFVSYYDYYQPEAYVPSSDTFIEKDASVNEHIEQMRLSATKAMLERRDVVVVASVSAIYGLGDPDLYLKMMLHLTVGMIIDQRAILRRLAELQYARNDQAFQRGTFRVRGEVIDIFPAESDDIALRVELFDEEVERLSLFDPLTGQIVSTIPRFTIYPKTHYVTPRERIVQAMEEIKEELAARRKVLLENNKLLEEQRLTQRTQFDLEMMNELGYCSGIENYSRFLSGRGPGEPPPTLFDYLPADGLLVVDESHVTIPQIGGMYRGDRARKETLVEYGFRLPSALDNRPLKFEEFEALAPQTIYVSATPGNYELEKSGGDVVDQVVRPTGLLDPIIEVRPVATQVDDLLSEIRQRAAINERVLVTTLTKRMAEDLTEYLEEHGERVRYLHSDIDTVERMEIIRDLRLGEFDVLVGINLLREGLDMPEVSLVAILDADKEGFLRSERSLIQTIGRAARNVNGKAILYGDKITPSMAKAIGETERRREKQQKYNEEHGITPQGLNKKVVDILALGQNIAKTKAKGRGKSRPIVEPDNVPMDMSPKALQQKIHELEGLMMQHAQNLEFEEAAQIRDQLHQLRELFIAAS</sequence>
<accession>Q3Z405</accession>
<evidence type="ECO:0000255" key="1">
    <source>
        <dbReference type="HAMAP-Rule" id="MF_00204"/>
    </source>
</evidence>
<evidence type="ECO:0000256" key="2">
    <source>
        <dbReference type="SAM" id="MobiDB-lite"/>
    </source>
</evidence>
<reference key="1">
    <citation type="journal article" date="2005" name="Nucleic Acids Res.">
        <title>Genome dynamics and diversity of Shigella species, the etiologic agents of bacillary dysentery.</title>
        <authorList>
            <person name="Yang F."/>
            <person name="Yang J."/>
            <person name="Zhang X."/>
            <person name="Chen L."/>
            <person name="Jiang Y."/>
            <person name="Yan Y."/>
            <person name="Tang X."/>
            <person name="Wang J."/>
            <person name="Xiong Z."/>
            <person name="Dong J."/>
            <person name="Xue Y."/>
            <person name="Zhu Y."/>
            <person name="Xu X."/>
            <person name="Sun L."/>
            <person name="Chen S."/>
            <person name="Nie H."/>
            <person name="Peng J."/>
            <person name="Xu J."/>
            <person name="Wang Y."/>
            <person name="Yuan Z."/>
            <person name="Wen Y."/>
            <person name="Yao Z."/>
            <person name="Shen Y."/>
            <person name="Qiang B."/>
            <person name="Hou Y."/>
            <person name="Yu J."/>
            <person name="Jin Q."/>
        </authorList>
    </citation>
    <scope>NUCLEOTIDE SEQUENCE [LARGE SCALE GENOMIC DNA]</scope>
    <source>
        <strain>Ss046</strain>
    </source>
</reference>
<keyword id="KW-0067">ATP-binding</keyword>
<keyword id="KW-0963">Cytoplasm</keyword>
<keyword id="KW-0227">DNA damage</keyword>
<keyword id="KW-0228">DNA excision</keyword>
<keyword id="KW-0234">DNA repair</keyword>
<keyword id="KW-0267">Excision nuclease</keyword>
<keyword id="KW-0547">Nucleotide-binding</keyword>
<keyword id="KW-1185">Reference proteome</keyword>
<keyword id="KW-0742">SOS response</keyword>
<comment type="function">
    <text evidence="1">The UvrABC repair system catalyzes the recognition and processing of DNA lesions. A damage recognition complex composed of 2 UvrA and 2 UvrB subunits scans DNA for abnormalities. Upon binding of the UvrA(2)B(2) complex to a putative damaged site, the DNA wraps around one UvrB monomer. DNA wrap is dependent on ATP binding by UvrB and probably causes local melting of the DNA helix, facilitating insertion of UvrB beta-hairpin between the DNA strands. Then UvrB probes one DNA strand for the presence of a lesion. If a lesion is found the UvrA subunits dissociate and the UvrB-DNA preincision complex is formed. This complex is subsequently bound by UvrC and the second UvrB is released. If no lesion is found, the DNA wraps around the other UvrB subunit that will check the other stand for damage.</text>
</comment>
<comment type="subunit">
    <text evidence="1">Forms a heterotetramer with UvrA during the search for lesions. Interacts with UvrC in an incision complex.</text>
</comment>
<comment type="subcellular location">
    <subcellularLocation>
        <location evidence="1">Cytoplasm</location>
    </subcellularLocation>
</comment>
<comment type="domain">
    <text evidence="1">The beta-hairpin motif is involved in DNA binding.</text>
</comment>
<comment type="similarity">
    <text evidence="1">Belongs to the UvrB family.</text>
</comment>
<proteinExistence type="inferred from homology"/>